<protein>
    <recommendedName>
        <fullName evidence="1">Arginine repressor</fullName>
    </recommendedName>
</protein>
<sequence>MNKQARHFKIREILQRHSVENQHDLLQLLREQGMSVAQATLSRDCAELGLMRVRVNGSYRMVVPDDNAGRIIKGLVGIEVLSINANETTVIIRTLPGRAHGVGSYLDQLKSPLVLGTIAGDDTVLVIPASVHNISSLIAYIHSNLSKT</sequence>
<dbReference type="EMBL" id="CP000108">
    <property type="protein sequence ID" value="ABB28042.1"/>
    <property type="molecule type" value="Genomic_DNA"/>
</dbReference>
<dbReference type="SMR" id="Q3ASI3"/>
<dbReference type="STRING" id="340177.Cag_0776"/>
<dbReference type="KEGG" id="cch:Cag_0776"/>
<dbReference type="eggNOG" id="COG1438">
    <property type="taxonomic scope" value="Bacteria"/>
</dbReference>
<dbReference type="HOGENOM" id="CLU_097103_3_0_10"/>
<dbReference type="OrthoDB" id="9807089at2"/>
<dbReference type="UniPathway" id="UPA00068"/>
<dbReference type="GO" id="GO:0005737">
    <property type="term" value="C:cytoplasm"/>
    <property type="evidence" value="ECO:0007669"/>
    <property type="project" value="UniProtKB-SubCell"/>
</dbReference>
<dbReference type="GO" id="GO:0034618">
    <property type="term" value="F:arginine binding"/>
    <property type="evidence" value="ECO:0007669"/>
    <property type="project" value="InterPro"/>
</dbReference>
<dbReference type="GO" id="GO:0003677">
    <property type="term" value="F:DNA binding"/>
    <property type="evidence" value="ECO:0007669"/>
    <property type="project" value="UniProtKB-KW"/>
</dbReference>
<dbReference type="GO" id="GO:0003700">
    <property type="term" value="F:DNA-binding transcription factor activity"/>
    <property type="evidence" value="ECO:0007669"/>
    <property type="project" value="UniProtKB-UniRule"/>
</dbReference>
<dbReference type="GO" id="GO:0006526">
    <property type="term" value="P:L-arginine biosynthetic process"/>
    <property type="evidence" value="ECO:0007669"/>
    <property type="project" value="UniProtKB-UniPathway"/>
</dbReference>
<dbReference type="GO" id="GO:0051259">
    <property type="term" value="P:protein complex oligomerization"/>
    <property type="evidence" value="ECO:0007669"/>
    <property type="project" value="InterPro"/>
</dbReference>
<dbReference type="GO" id="GO:1900079">
    <property type="term" value="P:regulation of arginine biosynthetic process"/>
    <property type="evidence" value="ECO:0007669"/>
    <property type="project" value="UniProtKB-UniRule"/>
</dbReference>
<dbReference type="Gene3D" id="3.30.1360.40">
    <property type="match status" value="1"/>
</dbReference>
<dbReference type="Gene3D" id="1.10.10.10">
    <property type="entry name" value="Winged helix-like DNA-binding domain superfamily/Winged helix DNA-binding domain"/>
    <property type="match status" value="1"/>
</dbReference>
<dbReference type="HAMAP" id="MF_00173">
    <property type="entry name" value="Arg_repressor"/>
    <property type="match status" value="1"/>
</dbReference>
<dbReference type="InterPro" id="IPR001669">
    <property type="entry name" value="Arg_repress"/>
</dbReference>
<dbReference type="InterPro" id="IPR020899">
    <property type="entry name" value="Arg_repress_C"/>
</dbReference>
<dbReference type="InterPro" id="IPR036251">
    <property type="entry name" value="Arg_repress_C_sf"/>
</dbReference>
<dbReference type="InterPro" id="IPR020900">
    <property type="entry name" value="Arg_repress_DNA-bd"/>
</dbReference>
<dbReference type="InterPro" id="IPR036388">
    <property type="entry name" value="WH-like_DNA-bd_sf"/>
</dbReference>
<dbReference type="InterPro" id="IPR036390">
    <property type="entry name" value="WH_DNA-bd_sf"/>
</dbReference>
<dbReference type="PANTHER" id="PTHR34471">
    <property type="entry name" value="ARGININE REPRESSOR"/>
    <property type="match status" value="1"/>
</dbReference>
<dbReference type="PANTHER" id="PTHR34471:SF1">
    <property type="entry name" value="ARGININE REPRESSOR"/>
    <property type="match status" value="1"/>
</dbReference>
<dbReference type="Pfam" id="PF01316">
    <property type="entry name" value="Arg_repressor"/>
    <property type="match status" value="1"/>
</dbReference>
<dbReference type="Pfam" id="PF02863">
    <property type="entry name" value="Arg_repressor_C"/>
    <property type="match status" value="1"/>
</dbReference>
<dbReference type="PRINTS" id="PR01467">
    <property type="entry name" value="ARGREPRESSOR"/>
</dbReference>
<dbReference type="SUPFAM" id="SSF55252">
    <property type="entry name" value="C-terminal domain of arginine repressor"/>
    <property type="match status" value="1"/>
</dbReference>
<dbReference type="SUPFAM" id="SSF46785">
    <property type="entry name" value="Winged helix' DNA-binding domain"/>
    <property type="match status" value="1"/>
</dbReference>
<gene>
    <name evidence="1" type="primary">argR</name>
    <name type="ordered locus">Cag_0776</name>
</gene>
<proteinExistence type="inferred from homology"/>
<reference key="1">
    <citation type="submission" date="2005-08" db="EMBL/GenBank/DDBJ databases">
        <title>Complete sequence of Chlorobium chlorochromatii CaD3.</title>
        <authorList>
            <consortium name="US DOE Joint Genome Institute"/>
            <person name="Copeland A."/>
            <person name="Lucas S."/>
            <person name="Lapidus A."/>
            <person name="Barry K."/>
            <person name="Detter J.C."/>
            <person name="Glavina T."/>
            <person name="Hammon N."/>
            <person name="Israni S."/>
            <person name="Pitluck S."/>
            <person name="Bryant D."/>
            <person name="Schmutz J."/>
            <person name="Larimer F."/>
            <person name="Land M."/>
            <person name="Kyrpides N."/>
            <person name="Ivanova N."/>
            <person name="Richardson P."/>
        </authorList>
    </citation>
    <scope>NUCLEOTIDE SEQUENCE [LARGE SCALE GENOMIC DNA]</scope>
    <source>
        <strain>CaD3</strain>
    </source>
</reference>
<comment type="function">
    <text evidence="1">Regulates arginine biosynthesis genes.</text>
</comment>
<comment type="pathway">
    <text>Amino-acid biosynthesis; L-arginine biosynthesis [regulation].</text>
</comment>
<comment type="subcellular location">
    <subcellularLocation>
        <location evidence="1">Cytoplasm</location>
    </subcellularLocation>
</comment>
<comment type="similarity">
    <text evidence="1">Belongs to the ArgR family.</text>
</comment>
<accession>Q3ASI3</accession>
<organism>
    <name type="scientific">Chlorobium chlorochromatii (strain CaD3)</name>
    <dbReference type="NCBI Taxonomy" id="340177"/>
    <lineage>
        <taxon>Bacteria</taxon>
        <taxon>Pseudomonadati</taxon>
        <taxon>Chlorobiota</taxon>
        <taxon>Chlorobiia</taxon>
        <taxon>Chlorobiales</taxon>
        <taxon>Chlorobiaceae</taxon>
        <taxon>Chlorobium/Pelodictyon group</taxon>
        <taxon>Chlorobium</taxon>
    </lineage>
</organism>
<evidence type="ECO:0000255" key="1">
    <source>
        <dbReference type="HAMAP-Rule" id="MF_00173"/>
    </source>
</evidence>
<name>ARGR_CHLCH</name>
<feature type="chain" id="PRO_1000023551" description="Arginine repressor">
    <location>
        <begin position="1"/>
        <end position="148"/>
    </location>
</feature>
<keyword id="KW-0028">Amino-acid biosynthesis</keyword>
<keyword id="KW-0055">Arginine biosynthesis</keyword>
<keyword id="KW-0963">Cytoplasm</keyword>
<keyword id="KW-0238">DNA-binding</keyword>
<keyword id="KW-0678">Repressor</keyword>
<keyword id="KW-0804">Transcription</keyword>
<keyword id="KW-0805">Transcription regulation</keyword>